<proteinExistence type="inferred from homology"/>
<name>RR15_CICAR</name>
<comment type="subunit">
    <text evidence="1">Part of the 30S ribosomal subunit.</text>
</comment>
<comment type="subcellular location">
    <subcellularLocation>
        <location>Plastid</location>
        <location>Chloroplast</location>
    </subcellularLocation>
</comment>
<comment type="similarity">
    <text evidence="2">Belongs to the universal ribosomal protein uS15 family.</text>
</comment>
<feature type="chain" id="PRO_0000354247" description="Small ribosomal subunit protein uS15c">
    <location>
        <begin position="1"/>
        <end position="91"/>
    </location>
</feature>
<gene>
    <name type="primary">rps15</name>
</gene>
<dbReference type="EMBL" id="EU835853">
    <property type="protein sequence ID" value="ACH41116.1"/>
    <property type="molecule type" value="Genomic_DNA"/>
</dbReference>
<dbReference type="RefSeq" id="YP_002149778.1">
    <property type="nucleotide sequence ID" value="NC_011163.1"/>
</dbReference>
<dbReference type="SMR" id="B5LMR9"/>
<dbReference type="GeneID" id="6797536"/>
<dbReference type="KEGG" id="cam:6797536"/>
<dbReference type="OrthoDB" id="1356520at2759"/>
<dbReference type="Proteomes" id="UP000087171">
    <property type="component" value="Chloroplast Pltd"/>
</dbReference>
<dbReference type="GO" id="GO:0009507">
    <property type="term" value="C:chloroplast"/>
    <property type="evidence" value="ECO:0007669"/>
    <property type="project" value="UniProtKB-SubCell"/>
</dbReference>
<dbReference type="GO" id="GO:1990904">
    <property type="term" value="C:ribonucleoprotein complex"/>
    <property type="evidence" value="ECO:0007669"/>
    <property type="project" value="UniProtKB-KW"/>
</dbReference>
<dbReference type="GO" id="GO:0005840">
    <property type="term" value="C:ribosome"/>
    <property type="evidence" value="ECO:0007669"/>
    <property type="project" value="UniProtKB-KW"/>
</dbReference>
<dbReference type="GO" id="GO:0003735">
    <property type="term" value="F:structural constituent of ribosome"/>
    <property type="evidence" value="ECO:0007669"/>
    <property type="project" value="InterPro"/>
</dbReference>
<dbReference type="GO" id="GO:0006412">
    <property type="term" value="P:translation"/>
    <property type="evidence" value="ECO:0007669"/>
    <property type="project" value="UniProtKB-UniRule"/>
</dbReference>
<dbReference type="CDD" id="cd00677">
    <property type="entry name" value="S15_NS1_EPRS_RNA-bind"/>
    <property type="match status" value="1"/>
</dbReference>
<dbReference type="Gene3D" id="1.10.287.10">
    <property type="entry name" value="S15/NS1, RNA-binding"/>
    <property type="match status" value="1"/>
</dbReference>
<dbReference type="HAMAP" id="MF_01343_B">
    <property type="entry name" value="Ribosomal_uS15_B"/>
    <property type="match status" value="1"/>
</dbReference>
<dbReference type="InterPro" id="IPR000589">
    <property type="entry name" value="Ribosomal_uS15"/>
</dbReference>
<dbReference type="InterPro" id="IPR005290">
    <property type="entry name" value="Ribosomal_uS15_bac-type"/>
</dbReference>
<dbReference type="InterPro" id="IPR009068">
    <property type="entry name" value="uS15_NS1_RNA-bd_sf"/>
</dbReference>
<dbReference type="NCBIfam" id="TIGR00952">
    <property type="entry name" value="S15_bact"/>
    <property type="match status" value="1"/>
</dbReference>
<dbReference type="PANTHER" id="PTHR23321">
    <property type="entry name" value="RIBOSOMAL PROTEIN S15, BACTERIAL AND ORGANELLAR"/>
    <property type="match status" value="1"/>
</dbReference>
<dbReference type="PANTHER" id="PTHR23321:SF26">
    <property type="entry name" value="SMALL RIBOSOMAL SUBUNIT PROTEIN US15M"/>
    <property type="match status" value="1"/>
</dbReference>
<dbReference type="Pfam" id="PF00312">
    <property type="entry name" value="Ribosomal_S15"/>
    <property type="match status" value="1"/>
</dbReference>
<dbReference type="SMART" id="SM01387">
    <property type="entry name" value="Ribosomal_S15"/>
    <property type="match status" value="1"/>
</dbReference>
<dbReference type="SUPFAM" id="SSF47060">
    <property type="entry name" value="S15/NS1 RNA-binding domain"/>
    <property type="match status" value="1"/>
</dbReference>
<dbReference type="PROSITE" id="PS00362">
    <property type="entry name" value="RIBOSOMAL_S15"/>
    <property type="match status" value="1"/>
</dbReference>
<geneLocation type="chloroplast"/>
<protein>
    <recommendedName>
        <fullName evidence="2">Small ribosomal subunit protein uS15c</fullName>
    </recommendedName>
    <alternativeName>
        <fullName>30S ribosomal protein S15, chloroplastic</fullName>
    </alternativeName>
</protein>
<keyword id="KW-0150">Chloroplast</keyword>
<keyword id="KW-0934">Plastid</keyword>
<keyword id="KW-1185">Reference proteome</keyword>
<keyword id="KW-0687">Ribonucleoprotein</keyword>
<keyword id="KW-0689">Ribosomal protein</keyword>
<organism>
    <name type="scientific">Cicer arietinum</name>
    <name type="common">Chickpea</name>
    <name type="synonym">Garbanzo</name>
    <dbReference type="NCBI Taxonomy" id="3827"/>
    <lineage>
        <taxon>Eukaryota</taxon>
        <taxon>Viridiplantae</taxon>
        <taxon>Streptophyta</taxon>
        <taxon>Embryophyta</taxon>
        <taxon>Tracheophyta</taxon>
        <taxon>Spermatophyta</taxon>
        <taxon>Magnoliopsida</taxon>
        <taxon>eudicotyledons</taxon>
        <taxon>Gunneridae</taxon>
        <taxon>Pentapetalae</taxon>
        <taxon>rosids</taxon>
        <taxon>fabids</taxon>
        <taxon>Fabales</taxon>
        <taxon>Fabaceae</taxon>
        <taxon>Papilionoideae</taxon>
        <taxon>50 kb inversion clade</taxon>
        <taxon>NPAAA clade</taxon>
        <taxon>Hologalegina</taxon>
        <taxon>IRL clade</taxon>
        <taxon>Cicereae</taxon>
        <taxon>Cicer</taxon>
    </lineage>
</organism>
<reference key="1">
    <citation type="journal article" date="2008" name="Mol. Phylogenet. Evol.">
        <title>Complete plastid genome sequence of the chickpea (Cicer arietinum) and the phylogenetic distribution of rps12 and clpP intron losses among legumes (Leguminosae).</title>
        <authorList>
            <person name="Jansen R.K."/>
            <person name="Wojciechowski M.F."/>
            <person name="Sanniyasi E."/>
            <person name="Lee S.-B."/>
            <person name="Daniell H."/>
        </authorList>
    </citation>
    <scope>NUCLEOTIDE SEQUENCE [LARGE SCALE GENOMIC DNA]</scope>
</reference>
<evidence type="ECO:0000250" key="1"/>
<evidence type="ECO:0000305" key="2"/>
<sequence>MIKNLFIPFISQKKKEEENPGSVEFQVVNFTNKIRKLTSHFKLHPKDYLSQRGLRKILGKRQGLLSYLLERDKRRFEKLMSELNTRDSQIR</sequence>
<accession>B5LMR9</accession>